<accession>Q3AS98</accession>
<gene>
    <name evidence="1" type="primary">mdh</name>
    <name type="ordered locus">Cag_0862</name>
</gene>
<protein>
    <recommendedName>
        <fullName evidence="1">Malate dehydrogenase</fullName>
        <ecNumber evidence="1">1.1.1.37</ecNumber>
    </recommendedName>
</protein>
<proteinExistence type="inferred from homology"/>
<keyword id="KW-0520">NAD</keyword>
<keyword id="KW-0560">Oxidoreductase</keyword>
<keyword id="KW-0816">Tricarboxylic acid cycle</keyword>
<comment type="function">
    <text evidence="1">Catalyzes the reversible oxidation of malate to oxaloacetate.</text>
</comment>
<comment type="catalytic activity">
    <reaction evidence="1">
        <text>(S)-malate + NAD(+) = oxaloacetate + NADH + H(+)</text>
        <dbReference type="Rhea" id="RHEA:21432"/>
        <dbReference type="ChEBI" id="CHEBI:15378"/>
        <dbReference type="ChEBI" id="CHEBI:15589"/>
        <dbReference type="ChEBI" id="CHEBI:16452"/>
        <dbReference type="ChEBI" id="CHEBI:57540"/>
        <dbReference type="ChEBI" id="CHEBI:57945"/>
        <dbReference type="EC" id="1.1.1.37"/>
    </reaction>
</comment>
<comment type="similarity">
    <text evidence="1">Belongs to the LDH/MDH superfamily. MDH type 3 family.</text>
</comment>
<organism>
    <name type="scientific">Chlorobium chlorochromatii (strain CaD3)</name>
    <dbReference type="NCBI Taxonomy" id="340177"/>
    <lineage>
        <taxon>Bacteria</taxon>
        <taxon>Pseudomonadati</taxon>
        <taxon>Chlorobiota</taxon>
        <taxon>Chlorobiia</taxon>
        <taxon>Chlorobiales</taxon>
        <taxon>Chlorobiaceae</taxon>
        <taxon>Chlorobium/Pelodictyon group</taxon>
        <taxon>Chlorobium</taxon>
    </lineage>
</organism>
<sequence>MKITVIGAGNVGATAALKIAEKQFANEVVLIDVVEGIPQGKALDMYESGAVSLFDTRVIGSNDYKDSADSDIILITAGLARKPGMTREDLLMKNAAIIKEVTSQVMKYSTNPIIVMVSNPVDIMTYVAHRVSGLPKERVIGMGGVLDTARYKNFIAETLNISMQDISALVLGGHGDAMVPVVNYTNVAGIPLTELLPLDIIDGLVERTRNGGIEIVNYLKSGSAYYAPAASTVEMIEAIARDRKRILPCTTLLDGQYGINSVFCGVPVKLGKNGIEQVLEINLSAPERSALQRSADIVEKNCKMLESLFA</sequence>
<reference key="1">
    <citation type="submission" date="2005-08" db="EMBL/GenBank/DDBJ databases">
        <title>Complete sequence of Chlorobium chlorochromatii CaD3.</title>
        <authorList>
            <consortium name="US DOE Joint Genome Institute"/>
            <person name="Copeland A."/>
            <person name="Lucas S."/>
            <person name="Lapidus A."/>
            <person name="Barry K."/>
            <person name="Detter J.C."/>
            <person name="Glavina T."/>
            <person name="Hammon N."/>
            <person name="Israni S."/>
            <person name="Pitluck S."/>
            <person name="Bryant D."/>
            <person name="Schmutz J."/>
            <person name="Larimer F."/>
            <person name="Land M."/>
            <person name="Kyrpides N."/>
            <person name="Ivanova N."/>
            <person name="Richardson P."/>
        </authorList>
    </citation>
    <scope>NUCLEOTIDE SEQUENCE [LARGE SCALE GENOMIC DNA]</scope>
    <source>
        <strain>CaD3</strain>
    </source>
</reference>
<evidence type="ECO:0000255" key="1">
    <source>
        <dbReference type="HAMAP-Rule" id="MF_00487"/>
    </source>
</evidence>
<feature type="chain" id="PRO_0000241944" description="Malate dehydrogenase">
    <location>
        <begin position="1"/>
        <end position="310"/>
    </location>
</feature>
<feature type="active site" description="Proton acceptor" evidence="1">
    <location>
        <position position="174"/>
    </location>
</feature>
<feature type="binding site" evidence="1">
    <location>
        <begin position="7"/>
        <end position="12"/>
    </location>
    <ligand>
        <name>NAD(+)</name>
        <dbReference type="ChEBI" id="CHEBI:57540"/>
    </ligand>
</feature>
<feature type="binding site" evidence="1">
    <location>
        <position position="32"/>
    </location>
    <ligand>
        <name>NAD(+)</name>
        <dbReference type="ChEBI" id="CHEBI:57540"/>
    </ligand>
</feature>
<feature type="binding site" evidence="1">
    <location>
        <position position="81"/>
    </location>
    <ligand>
        <name>substrate</name>
    </ligand>
</feature>
<feature type="binding site" evidence="1">
    <location>
        <position position="87"/>
    </location>
    <ligand>
        <name>substrate</name>
    </ligand>
</feature>
<feature type="binding site" evidence="1">
    <location>
        <position position="94"/>
    </location>
    <ligand>
        <name>NAD(+)</name>
        <dbReference type="ChEBI" id="CHEBI:57540"/>
    </ligand>
</feature>
<feature type="binding site" evidence="1">
    <location>
        <begin position="117"/>
        <end position="119"/>
    </location>
    <ligand>
        <name>NAD(+)</name>
        <dbReference type="ChEBI" id="CHEBI:57540"/>
    </ligand>
</feature>
<feature type="binding site" evidence="1">
    <location>
        <position position="119"/>
    </location>
    <ligand>
        <name>substrate</name>
    </ligand>
</feature>
<feature type="binding site" evidence="1">
    <location>
        <position position="150"/>
    </location>
    <ligand>
        <name>substrate</name>
    </ligand>
</feature>
<dbReference type="EC" id="1.1.1.37" evidence="1"/>
<dbReference type="EMBL" id="CP000108">
    <property type="protein sequence ID" value="ABB28127.1"/>
    <property type="molecule type" value="Genomic_DNA"/>
</dbReference>
<dbReference type="SMR" id="Q3AS98"/>
<dbReference type="STRING" id="340177.Cag_0862"/>
<dbReference type="KEGG" id="cch:Cag_0862"/>
<dbReference type="eggNOG" id="COG0039">
    <property type="taxonomic scope" value="Bacteria"/>
</dbReference>
<dbReference type="HOGENOM" id="CLU_045401_2_1_10"/>
<dbReference type="OrthoDB" id="9802969at2"/>
<dbReference type="GO" id="GO:0004459">
    <property type="term" value="F:L-lactate dehydrogenase activity"/>
    <property type="evidence" value="ECO:0007669"/>
    <property type="project" value="TreeGrafter"/>
</dbReference>
<dbReference type="GO" id="GO:0030060">
    <property type="term" value="F:L-malate dehydrogenase (NAD+) activity"/>
    <property type="evidence" value="ECO:0007669"/>
    <property type="project" value="UniProtKB-UniRule"/>
</dbReference>
<dbReference type="GO" id="GO:0006089">
    <property type="term" value="P:lactate metabolic process"/>
    <property type="evidence" value="ECO:0007669"/>
    <property type="project" value="TreeGrafter"/>
</dbReference>
<dbReference type="GO" id="GO:0006099">
    <property type="term" value="P:tricarboxylic acid cycle"/>
    <property type="evidence" value="ECO:0007669"/>
    <property type="project" value="UniProtKB-UniRule"/>
</dbReference>
<dbReference type="CDD" id="cd01339">
    <property type="entry name" value="LDH-like_MDH"/>
    <property type="match status" value="1"/>
</dbReference>
<dbReference type="FunFam" id="3.40.50.720:FF:000018">
    <property type="entry name" value="Malate dehydrogenase"/>
    <property type="match status" value="1"/>
</dbReference>
<dbReference type="FunFam" id="3.90.110.10:FF:000004">
    <property type="entry name" value="Malate dehydrogenase"/>
    <property type="match status" value="1"/>
</dbReference>
<dbReference type="Gene3D" id="3.90.110.10">
    <property type="entry name" value="Lactate dehydrogenase/glycoside hydrolase, family 4, C-terminal"/>
    <property type="match status" value="1"/>
</dbReference>
<dbReference type="Gene3D" id="3.40.50.720">
    <property type="entry name" value="NAD(P)-binding Rossmann-like Domain"/>
    <property type="match status" value="1"/>
</dbReference>
<dbReference type="HAMAP" id="MF_00487">
    <property type="entry name" value="Malate_dehydrog_3"/>
    <property type="match status" value="1"/>
</dbReference>
<dbReference type="InterPro" id="IPR001557">
    <property type="entry name" value="L-lactate/malate_DH"/>
</dbReference>
<dbReference type="InterPro" id="IPR022383">
    <property type="entry name" value="Lactate/malate_DH_C"/>
</dbReference>
<dbReference type="InterPro" id="IPR001236">
    <property type="entry name" value="Lactate/malate_DH_N"/>
</dbReference>
<dbReference type="InterPro" id="IPR015955">
    <property type="entry name" value="Lactate_DH/Glyco_Ohase_4_C"/>
</dbReference>
<dbReference type="InterPro" id="IPR011275">
    <property type="entry name" value="Malate_DH_type3"/>
</dbReference>
<dbReference type="InterPro" id="IPR036291">
    <property type="entry name" value="NAD(P)-bd_dom_sf"/>
</dbReference>
<dbReference type="NCBIfam" id="TIGR01763">
    <property type="entry name" value="MalateDH_bact"/>
    <property type="match status" value="1"/>
</dbReference>
<dbReference type="NCBIfam" id="NF004863">
    <property type="entry name" value="PRK06223.1"/>
    <property type="match status" value="1"/>
</dbReference>
<dbReference type="PANTHER" id="PTHR43128">
    <property type="entry name" value="L-2-HYDROXYCARBOXYLATE DEHYDROGENASE (NAD(P)(+))"/>
    <property type="match status" value="1"/>
</dbReference>
<dbReference type="PANTHER" id="PTHR43128:SF16">
    <property type="entry name" value="L-LACTATE DEHYDROGENASE"/>
    <property type="match status" value="1"/>
</dbReference>
<dbReference type="Pfam" id="PF02866">
    <property type="entry name" value="Ldh_1_C"/>
    <property type="match status" value="1"/>
</dbReference>
<dbReference type="Pfam" id="PF00056">
    <property type="entry name" value="Ldh_1_N"/>
    <property type="match status" value="1"/>
</dbReference>
<dbReference type="PIRSF" id="PIRSF000102">
    <property type="entry name" value="Lac_mal_DH"/>
    <property type="match status" value="1"/>
</dbReference>
<dbReference type="PRINTS" id="PR00086">
    <property type="entry name" value="LLDHDRGNASE"/>
</dbReference>
<dbReference type="SUPFAM" id="SSF56327">
    <property type="entry name" value="LDH C-terminal domain-like"/>
    <property type="match status" value="1"/>
</dbReference>
<dbReference type="SUPFAM" id="SSF51735">
    <property type="entry name" value="NAD(P)-binding Rossmann-fold domains"/>
    <property type="match status" value="1"/>
</dbReference>
<name>MDH_CHLCH</name>